<accession>Q2YBL2</accession>
<reference key="1">
    <citation type="submission" date="2005-08" db="EMBL/GenBank/DDBJ databases">
        <title>Complete sequence of chromosome 1 of Nitrosospira multiformis ATCC 25196.</title>
        <authorList>
            <person name="Copeland A."/>
            <person name="Lucas S."/>
            <person name="Lapidus A."/>
            <person name="Barry K."/>
            <person name="Detter J.C."/>
            <person name="Glavina T."/>
            <person name="Hammon N."/>
            <person name="Israni S."/>
            <person name="Pitluck S."/>
            <person name="Chain P."/>
            <person name="Malfatti S."/>
            <person name="Shin M."/>
            <person name="Vergez L."/>
            <person name="Schmutz J."/>
            <person name="Larimer F."/>
            <person name="Land M."/>
            <person name="Hauser L."/>
            <person name="Kyrpides N."/>
            <person name="Lykidis A."/>
            <person name="Richardson P."/>
        </authorList>
    </citation>
    <scope>NUCLEOTIDE SEQUENCE [LARGE SCALE GENOMIC DNA]</scope>
    <source>
        <strain>ATCC 25196 / NCIMB 11849 / C 71</strain>
    </source>
</reference>
<gene>
    <name evidence="1" type="primary">glyQ</name>
    <name type="ordered locus">Nmul_A0551</name>
</gene>
<comment type="catalytic activity">
    <reaction evidence="1">
        <text>tRNA(Gly) + glycine + ATP = glycyl-tRNA(Gly) + AMP + diphosphate</text>
        <dbReference type="Rhea" id="RHEA:16013"/>
        <dbReference type="Rhea" id="RHEA-COMP:9664"/>
        <dbReference type="Rhea" id="RHEA-COMP:9683"/>
        <dbReference type="ChEBI" id="CHEBI:30616"/>
        <dbReference type="ChEBI" id="CHEBI:33019"/>
        <dbReference type="ChEBI" id="CHEBI:57305"/>
        <dbReference type="ChEBI" id="CHEBI:78442"/>
        <dbReference type="ChEBI" id="CHEBI:78522"/>
        <dbReference type="ChEBI" id="CHEBI:456215"/>
        <dbReference type="EC" id="6.1.1.14"/>
    </reaction>
</comment>
<comment type="subunit">
    <text evidence="1">Tetramer of two alpha and two beta subunits.</text>
</comment>
<comment type="subcellular location">
    <subcellularLocation>
        <location evidence="1">Cytoplasm</location>
    </subcellularLocation>
</comment>
<comment type="similarity">
    <text evidence="1">Belongs to the class-II aminoacyl-tRNA synthetase family.</text>
</comment>
<protein>
    <recommendedName>
        <fullName evidence="1">Glycine--tRNA ligase alpha subunit</fullName>
        <ecNumber evidence="1">6.1.1.14</ecNumber>
    </recommendedName>
    <alternativeName>
        <fullName evidence="1">Glycyl-tRNA synthetase alpha subunit</fullName>
        <shortName evidence="1">GlyRS</shortName>
    </alternativeName>
</protein>
<keyword id="KW-0030">Aminoacyl-tRNA synthetase</keyword>
<keyword id="KW-0067">ATP-binding</keyword>
<keyword id="KW-0963">Cytoplasm</keyword>
<keyword id="KW-0436">Ligase</keyword>
<keyword id="KW-0547">Nucleotide-binding</keyword>
<keyword id="KW-0648">Protein biosynthesis</keyword>
<keyword id="KW-1185">Reference proteome</keyword>
<name>SYGA_NITMU</name>
<dbReference type="EC" id="6.1.1.14" evidence="1"/>
<dbReference type="EMBL" id="CP000103">
    <property type="protein sequence ID" value="ABB73859.1"/>
    <property type="molecule type" value="Genomic_DNA"/>
</dbReference>
<dbReference type="RefSeq" id="WP_011379913.1">
    <property type="nucleotide sequence ID" value="NC_007614.1"/>
</dbReference>
<dbReference type="SMR" id="Q2YBL2"/>
<dbReference type="STRING" id="323848.Nmul_A0551"/>
<dbReference type="KEGG" id="nmu:Nmul_A0551"/>
<dbReference type="eggNOG" id="COG0752">
    <property type="taxonomic scope" value="Bacteria"/>
</dbReference>
<dbReference type="HOGENOM" id="CLU_057066_1_0_4"/>
<dbReference type="OrthoDB" id="9802183at2"/>
<dbReference type="Proteomes" id="UP000002718">
    <property type="component" value="Chromosome"/>
</dbReference>
<dbReference type="GO" id="GO:0005829">
    <property type="term" value="C:cytosol"/>
    <property type="evidence" value="ECO:0007669"/>
    <property type="project" value="TreeGrafter"/>
</dbReference>
<dbReference type="GO" id="GO:0005524">
    <property type="term" value="F:ATP binding"/>
    <property type="evidence" value="ECO:0007669"/>
    <property type="project" value="UniProtKB-UniRule"/>
</dbReference>
<dbReference type="GO" id="GO:0004820">
    <property type="term" value="F:glycine-tRNA ligase activity"/>
    <property type="evidence" value="ECO:0007669"/>
    <property type="project" value="UniProtKB-UniRule"/>
</dbReference>
<dbReference type="GO" id="GO:0006426">
    <property type="term" value="P:glycyl-tRNA aminoacylation"/>
    <property type="evidence" value="ECO:0007669"/>
    <property type="project" value="UniProtKB-UniRule"/>
</dbReference>
<dbReference type="CDD" id="cd00733">
    <property type="entry name" value="GlyRS_alpha_core"/>
    <property type="match status" value="1"/>
</dbReference>
<dbReference type="FunFam" id="3.30.930.10:FF:000006">
    <property type="entry name" value="Glycine--tRNA ligase alpha subunit"/>
    <property type="match status" value="1"/>
</dbReference>
<dbReference type="Gene3D" id="3.30.930.10">
    <property type="entry name" value="Bira Bifunctional Protein, Domain 2"/>
    <property type="match status" value="1"/>
</dbReference>
<dbReference type="Gene3D" id="1.20.58.180">
    <property type="entry name" value="Class II aaRS and biotin synthetases, domain 2"/>
    <property type="match status" value="1"/>
</dbReference>
<dbReference type="HAMAP" id="MF_00254">
    <property type="entry name" value="Gly_tRNA_synth_alpha"/>
    <property type="match status" value="1"/>
</dbReference>
<dbReference type="InterPro" id="IPR045864">
    <property type="entry name" value="aa-tRNA-synth_II/BPL/LPL"/>
</dbReference>
<dbReference type="InterPro" id="IPR006194">
    <property type="entry name" value="Gly-tRNA-synth_heterodimer"/>
</dbReference>
<dbReference type="InterPro" id="IPR002310">
    <property type="entry name" value="Gly-tRNA_ligase_asu"/>
</dbReference>
<dbReference type="NCBIfam" id="TIGR00388">
    <property type="entry name" value="glyQ"/>
    <property type="match status" value="1"/>
</dbReference>
<dbReference type="NCBIfam" id="NF006827">
    <property type="entry name" value="PRK09348.1"/>
    <property type="match status" value="1"/>
</dbReference>
<dbReference type="PANTHER" id="PTHR30075:SF2">
    <property type="entry name" value="GLYCINE--TRNA LIGASE, CHLOROPLASTIC_MITOCHONDRIAL 2"/>
    <property type="match status" value="1"/>
</dbReference>
<dbReference type="PANTHER" id="PTHR30075">
    <property type="entry name" value="GLYCYL-TRNA SYNTHETASE"/>
    <property type="match status" value="1"/>
</dbReference>
<dbReference type="Pfam" id="PF02091">
    <property type="entry name" value="tRNA-synt_2e"/>
    <property type="match status" value="1"/>
</dbReference>
<dbReference type="PRINTS" id="PR01044">
    <property type="entry name" value="TRNASYNTHGA"/>
</dbReference>
<dbReference type="SUPFAM" id="SSF55681">
    <property type="entry name" value="Class II aaRS and biotin synthetases"/>
    <property type="match status" value="1"/>
</dbReference>
<dbReference type="PROSITE" id="PS50861">
    <property type="entry name" value="AA_TRNA_LIGASE_II_GLYAB"/>
    <property type="match status" value="1"/>
</dbReference>
<proteinExistence type="inferred from homology"/>
<sequence>MRTFQEIILALQHYWTRQGCALLQPYDMEVGAGTSHTATFLRALGPEPWKAAYVQPTRRPKDGRYGENPNRLQHYYQFQAVLKPAPSDILELYLGSLEELGFDLRQNDIRFVEDDWENPTLGAWGLGWEVWLNGMEVTQFTYFQQVGGMNCKPITGEITYGLERLAMYLQGVDNVFDLTWTKGLSYRDVYHQNEVEQSFYNFGHSDLDFLFQAFASHEAQARHLVEQGLPLPAYEQVLKAAHTFNLLDARGAISVTERAAYIGRIRELARSVAHAYYESRKRLGFPLAPVEWTQELLEKAA</sequence>
<organism>
    <name type="scientific">Nitrosospira multiformis (strain ATCC 25196 / NCIMB 11849 / C 71)</name>
    <dbReference type="NCBI Taxonomy" id="323848"/>
    <lineage>
        <taxon>Bacteria</taxon>
        <taxon>Pseudomonadati</taxon>
        <taxon>Pseudomonadota</taxon>
        <taxon>Betaproteobacteria</taxon>
        <taxon>Nitrosomonadales</taxon>
        <taxon>Nitrosomonadaceae</taxon>
        <taxon>Nitrosospira</taxon>
    </lineage>
</organism>
<evidence type="ECO:0000255" key="1">
    <source>
        <dbReference type="HAMAP-Rule" id="MF_00254"/>
    </source>
</evidence>
<feature type="chain" id="PRO_1000047451" description="Glycine--tRNA ligase alpha subunit">
    <location>
        <begin position="1"/>
        <end position="301"/>
    </location>
</feature>